<feature type="signal peptide" evidence="1">
    <location>
        <begin position="1"/>
        <end position="24"/>
    </location>
</feature>
<feature type="chain" id="PRO_0000367826" description="Phosphatidylinositol-glycan-specific phospholipase D">
    <location>
        <begin position="25"/>
        <end position="948"/>
    </location>
</feature>
<feature type="repeat" description="FG-GAP 1" evidence="2">
    <location>
        <begin position="451"/>
        <end position="512"/>
    </location>
</feature>
<feature type="repeat" description="FG-GAP 2" evidence="2">
    <location>
        <begin position="526"/>
        <end position="588"/>
    </location>
</feature>
<feature type="repeat" description="FG-GAP 3" evidence="2">
    <location>
        <begin position="596"/>
        <end position="656"/>
    </location>
</feature>
<feature type="repeat" description="FG-GAP 4" evidence="2">
    <location>
        <begin position="663"/>
        <end position="724"/>
    </location>
</feature>
<feature type="repeat" description="FG-GAP 5" evidence="2">
    <location>
        <begin position="799"/>
        <end position="861"/>
    </location>
</feature>
<feature type="repeat" description="FG-GAP 6" evidence="2">
    <location>
        <begin position="895"/>
        <end position="948"/>
    </location>
</feature>
<feature type="glycosylation site" description="N-linked (GlcNAc...) asparagine" evidence="1">
    <location>
        <position position="39"/>
    </location>
</feature>
<feature type="glycosylation site" description="N-linked (GlcNAc...) asparagine" evidence="1">
    <location>
        <position position="78"/>
    </location>
</feature>
<feature type="glycosylation site" description="N-linked (GlcNAc...) asparagine" evidence="1">
    <location>
        <position position="148"/>
    </location>
</feature>
<feature type="glycosylation site" description="N-linked (GlcNAc...) asparagine" evidence="1">
    <location>
        <position position="300"/>
    </location>
</feature>
<feature type="glycosylation site" description="N-linked (GlcNAc...) asparagine" evidence="1">
    <location>
        <position position="433"/>
    </location>
</feature>
<feature type="glycosylation site" description="N-linked (GlcNAc...) asparagine" evidence="1">
    <location>
        <position position="452"/>
    </location>
</feature>
<feature type="glycosylation site" description="N-linked (GlcNAc...) asparagine" evidence="1">
    <location>
        <position position="506"/>
    </location>
</feature>
<feature type="glycosylation site" description="N-linked (GlcNAc...) asparagine" evidence="1">
    <location>
        <position position="535"/>
    </location>
</feature>
<feature type="glycosylation site" description="N-linked (GlcNAc...) asparagine" evidence="1">
    <location>
        <position position="749"/>
    </location>
</feature>
<feature type="glycosylation site" description="N-linked (GlcNAc...) asparagine" evidence="1">
    <location>
        <position position="788"/>
    </location>
</feature>
<reference key="1">
    <citation type="journal article" date="2002" name="Nature">
        <title>Sequence and analysis of chromosome 2 of Dictyostelium discoideum.</title>
        <authorList>
            <person name="Gloeckner G."/>
            <person name="Eichinger L."/>
            <person name="Szafranski K."/>
            <person name="Pachebat J.A."/>
            <person name="Bankier A.T."/>
            <person name="Dear P.H."/>
            <person name="Lehmann R."/>
            <person name="Baumgart C."/>
            <person name="Parra G."/>
            <person name="Abril J.F."/>
            <person name="Guigo R."/>
            <person name="Kumpf K."/>
            <person name="Tunggal B."/>
            <person name="Cox E.C."/>
            <person name="Quail M.A."/>
            <person name="Platzer M."/>
            <person name="Rosenthal A."/>
            <person name="Noegel A.A."/>
        </authorList>
    </citation>
    <scope>NUCLEOTIDE SEQUENCE [LARGE SCALE GENOMIC DNA]</scope>
    <source>
        <strain>AX4</strain>
    </source>
</reference>
<reference key="2">
    <citation type="journal article" date="2005" name="Nature">
        <title>The genome of the social amoeba Dictyostelium discoideum.</title>
        <authorList>
            <person name="Eichinger L."/>
            <person name="Pachebat J.A."/>
            <person name="Gloeckner G."/>
            <person name="Rajandream M.A."/>
            <person name="Sucgang R."/>
            <person name="Berriman M."/>
            <person name="Song J."/>
            <person name="Olsen R."/>
            <person name="Szafranski K."/>
            <person name="Xu Q."/>
            <person name="Tunggal B."/>
            <person name="Kummerfeld S."/>
            <person name="Madera M."/>
            <person name="Konfortov B.A."/>
            <person name="Rivero F."/>
            <person name="Bankier A.T."/>
            <person name="Lehmann R."/>
            <person name="Hamlin N."/>
            <person name="Davies R."/>
            <person name="Gaudet P."/>
            <person name="Fey P."/>
            <person name="Pilcher K."/>
            <person name="Chen G."/>
            <person name="Saunders D."/>
            <person name="Sodergren E.J."/>
            <person name="Davis P."/>
            <person name="Kerhornou A."/>
            <person name="Nie X."/>
            <person name="Hall N."/>
            <person name="Anjard C."/>
            <person name="Hemphill L."/>
            <person name="Bason N."/>
            <person name="Farbrother P."/>
            <person name="Desany B."/>
            <person name="Just E."/>
            <person name="Morio T."/>
            <person name="Rost R."/>
            <person name="Churcher C.M."/>
            <person name="Cooper J."/>
            <person name="Haydock S."/>
            <person name="van Driessche N."/>
            <person name="Cronin A."/>
            <person name="Goodhead I."/>
            <person name="Muzny D.M."/>
            <person name="Mourier T."/>
            <person name="Pain A."/>
            <person name="Lu M."/>
            <person name="Harper D."/>
            <person name="Lindsay R."/>
            <person name="Hauser H."/>
            <person name="James K.D."/>
            <person name="Quiles M."/>
            <person name="Madan Babu M."/>
            <person name="Saito T."/>
            <person name="Buchrieser C."/>
            <person name="Wardroper A."/>
            <person name="Felder M."/>
            <person name="Thangavelu M."/>
            <person name="Johnson D."/>
            <person name="Knights A."/>
            <person name="Loulseged H."/>
            <person name="Mungall K.L."/>
            <person name="Oliver K."/>
            <person name="Price C."/>
            <person name="Quail M.A."/>
            <person name="Urushihara H."/>
            <person name="Hernandez J."/>
            <person name="Rabbinowitsch E."/>
            <person name="Steffen D."/>
            <person name="Sanders M."/>
            <person name="Ma J."/>
            <person name="Kohara Y."/>
            <person name="Sharp S."/>
            <person name="Simmonds M.N."/>
            <person name="Spiegler S."/>
            <person name="Tivey A."/>
            <person name="Sugano S."/>
            <person name="White B."/>
            <person name="Walker D."/>
            <person name="Woodward J.R."/>
            <person name="Winckler T."/>
            <person name="Tanaka Y."/>
            <person name="Shaulsky G."/>
            <person name="Schleicher M."/>
            <person name="Weinstock G.M."/>
            <person name="Rosenthal A."/>
            <person name="Cox E.C."/>
            <person name="Chisholm R.L."/>
            <person name="Gibbs R.A."/>
            <person name="Loomis W.F."/>
            <person name="Platzer M."/>
            <person name="Kay R.R."/>
            <person name="Williams J.G."/>
            <person name="Dear P.H."/>
            <person name="Noegel A.A."/>
            <person name="Barrell B.G."/>
            <person name="Kuspa A."/>
        </authorList>
    </citation>
    <scope>NUCLEOTIDE SEQUENCE [LARGE SCALE GENOMIC DNA]</scope>
    <source>
        <strain>AX4</strain>
    </source>
</reference>
<reference key="3">
    <citation type="journal article" date="2003" name="Eukaryot. Cell">
        <title>Changing patterns of gene expression in Dictyostelium prestalk cell subtypes recognized by in situ hybridization with genes from microarray analyses.</title>
        <authorList>
            <person name="Maeda M."/>
            <person name="Sakamoto H."/>
            <person name="Iranfar N."/>
            <person name="Fuller D."/>
            <person name="Maruo T."/>
            <person name="Ogihara S."/>
            <person name="Morio T."/>
            <person name="Urushihara H."/>
            <person name="Tanaka Y."/>
            <person name="Loomis W.F."/>
        </authorList>
    </citation>
    <scope>IDENTIFICATION</scope>
</reference>
<reference key="4">
    <citation type="journal article" date="2004" name="FEBS Lett.">
        <title>A distant evolutionary relationship between GPI-specific phospholipase D and bacterial phosphatidylcholine-preferring phospholipase C.</title>
        <authorList>
            <person name="Rigden D.J."/>
        </authorList>
    </citation>
    <scope>NOMENCLATURE</scope>
</reference>
<accession>Q86AV9</accession>
<accession>Q550X5</accession>
<comment type="function">
    <text>Hydrolyzes the inositol phosphate linkage in proteins anchored by phosphatidylinositol glycans (GPI-anchor) thus releasing these proteins from the membrane. May also cleave GPI anchor intermediates intracellularly.</text>
</comment>
<comment type="catalytic activity">
    <reaction>
        <text>a 6-(alpha-D-glucosaminyl)-1-(1,2-diacyl-sn-glycero-3-phospho)-1D-myo-inositol + H2O = 6-(alpha-D-glucosaminyl)-1D-myo-inositol + a 1,2-diacyl-sn-glycero-3-phosphate + H(+)</text>
        <dbReference type="Rhea" id="RHEA:10832"/>
        <dbReference type="ChEBI" id="CHEBI:15377"/>
        <dbReference type="ChEBI" id="CHEBI:15378"/>
        <dbReference type="ChEBI" id="CHEBI:57997"/>
        <dbReference type="ChEBI" id="CHEBI:58608"/>
        <dbReference type="ChEBI" id="CHEBI:58700"/>
        <dbReference type="EC" id="3.1.4.50"/>
    </reaction>
</comment>
<comment type="cofactor">
    <cofactor evidence="3">
        <name>Ca(2+)</name>
        <dbReference type="ChEBI" id="CHEBI:29108"/>
    </cofactor>
    <text evidence="3">Binds Ca(2+).</text>
</comment>
<comment type="subcellular location">
    <subcellularLocation>
        <location evidence="3">Secreted</location>
    </subcellularLocation>
</comment>
<comment type="similarity">
    <text evidence="3">Belongs to the GPLD1 family.</text>
</comment>
<organism>
    <name type="scientific">Dictyostelium discoideum</name>
    <name type="common">Social amoeba</name>
    <dbReference type="NCBI Taxonomy" id="44689"/>
    <lineage>
        <taxon>Eukaryota</taxon>
        <taxon>Amoebozoa</taxon>
        <taxon>Evosea</taxon>
        <taxon>Eumycetozoa</taxon>
        <taxon>Dictyostelia</taxon>
        <taxon>Dictyosteliales</taxon>
        <taxon>Dictyosteliaceae</taxon>
        <taxon>Dictyostelium</taxon>
    </lineage>
</organism>
<name>PLDG_DICDI</name>
<protein>
    <recommendedName>
        <fullName>Phosphatidylinositol-glycan-specific phospholipase D</fullName>
        <shortName>PI-G PLD</shortName>
        <ecNumber>3.1.4.50</ecNumber>
    </recommendedName>
    <alternativeName>
        <fullName>Glycosyl-phosphatidylinositol-specific phospholipase D</fullName>
        <shortName>GPI-PLD</shortName>
        <shortName>GPI-specific phospholipase D</shortName>
    </alternativeName>
    <alternativeName>
        <fullName>Phospholipase G</fullName>
    </alternativeName>
</protein>
<keyword id="KW-0106">Calcium</keyword>
<keyword id="KW-0325">Glycoprotein</keyword>
<keyword id="KW-0378">Hydrolase</keyword>
<keyword id="KW-1185">Reference proteome</keyword>
<keyword id="KW-0677">Repeat</keyword>
<keyword id="KW-0964">Secreted</keyword>
<keyword id="KW-0732">Signal</keyword>
<gene>
    <name type="primary">pldG</name>
    <name type="ORF">DDB_G0276919</name>
</gene>
<proteinExistence type="inferred from homology"/>
<evidence type="ECO:0000255" key="1"/>
<evidence type="ECO:0000255" key="2">
    <source>
        <dbReference type="PROSITE-ProRule" id="PRU00803"/>
    </source>
</evidence>
<evidence type="ECO:0000305" key="3"/>
<sequence>MKNKIILLWLLLIVILCTISNVKGCGMTTHNTVARRAYNFSSFDGFEQYQKYVSENFDVFDAGAAFPDFGYDCGGLANESEAAHWPPFLRAATKYLLETYPQPWSLDGIRLAVFLLGVTSHQIADISWHSIGGIQQGLIRAMAGQDFNGTYELAHGNADEGGEFELAYNYDLSWLSDKWYVPITDIKNIFHSMNYPRVDDENLLRCNAILYAGAMGVKIGGRFFYPEIAKKSPFLVDHYQDYFIGGLDDMSIWTSYCWPVLMGWMDGEDIGDFCFIQPDPNNDDDNQHLRLHHKHSILKNGSKIKEALSKSILNEMKITNNGKGVTFSLPNSMEKAINQVLNKFNQNPIGTLLEKYLPNLFNNKNKFYQENENEQYNHDEEELNIIDIDIDIEEEEQEEEEDKPIRMLSKNNNFKNYEYLNDKKKSSSSKLKNKSKKNIIKLNSDSNDLGTNFTTIYGQNMYSYFGKDIRSKDLNGDGFDDLIISSPGFGVPGSMQTGCVYYIISNGSSVTIDGGSGFTSEFDIDQVATGKLCGNETHAKFGWNIDVLDFNLDGIFDIIIGAPSSSNANLQYLGMIYIYLGEKNNPAGEWSTESDLPSITIQGIEYADTIGTVLRVADCNADSNADLILGSPHSAGGGTQRGTVQIFYSSKKRISGIPISLNDADYYGHGEVDYEWFGYEIKVAGQGDSSTLLVGSPNYHDEETAIVNIGKITSFPYNVNLNSFDLNPKFVMVGVNKNDKLGYSYNMVNGSLFGLDNVNDIMVLSLPTRGFGDDFDQVGEVVLIDIDNLSGFVEIKNVNLLLSIKGTTKYSRFGESLLIGKLESTDEFARLFVGAPLWTDSIDTGPGCVFTFLPNQHLTNDPAVLKQNIINNTPVVIYDSTHSIKTFRIDDDSGSSGGRSFNNKRKDSRFGFRILLSDFNNDGKNDLIVSADRDSSKILEGGSINIFQ</sequence>
<dbReference type="EC" id="3.1.4.50"/>
<dbReference type="EMBL" id="AAFI02000019">
    <property type="protein sequence ID" value="EAL68961.1"/>
    <property type="molecule type" value="Genomic_DNA"/>
</dbReference>
<dbReference type="RefSeq" id="XP_642807.1">
    <property type="nucleotide sequence ID" value="XM_637715.1"/>
</dbReference>
<dbReference type="STRING" id="44689.Q86AV9"/>
<dbReference type="GlyCosmos" id="Q86AV9">
    <property type="glycosylation" value="10 sites, No reported glycans"/>
</dbReference>
<dbReference type="GlyGen" id="Q86AV9">
    <property type="glycosylation" value="10 sites"/>
</dbReference>
<dbReference type="PaxDb" id="44689-DDB0229914"/>
<dbReference type="EnsemblProtists" id="EAL68961">
    <property type="protein sequence ID" value="EAL68961"/>
    <property type="gene ID" value="DDB_G0276919"/>
</dbReference>
<dbReference type="GeneID" id="8620669"/>
<dbReference type="KEGG" id="ddi:DDB_G0276919"/>
<dbReference type="dictyBase" id="DDB_G0276919">
    <property type="gene designation" value="pldG"/>
</dbReference>
<dbReference type="VEuPathDB" id="AmoebaDB:DDB_G0276919"/>
<dbReference type="eggNOG" id="KOG3637">
    <property type="taxonomic scope" value="Eukaryota"/>
</dbReference>
<dbReference type="HOGENOM" id="CLU_011756_0_0_1"/>
<dbReference type="InParanoid" id="Q86AV9"/>
<dbReference type="OMA" id="CGMTTHN"/>
<dbReference type="PhylomeDB" id="Q86AV9"/>
<dbReference type="Reactome" id="R-DDI-163125">
    <property type="pathway name" value="Post-translational modification: synthesis of GPI-anchored proteins"/>
</dbReference>
<dbReference type="PRO" id="PR:Q86AV9"/>
<dbReference type="Proteomes" id="UP000002195">
    <property type="component" value="Chromosome 2"/>
</dbReference>
<dbReference type="GO" id="GO:0031012">
    <property type="term" value="C:extracellular matrix"/>
    <property type="evidence" value="ECO:0000318"/>
    <property type="project" value="GO_Central"/>
</dbReference>
<dbReference type="GO" id="GO:0005615">
    <property type="term" value="C:extracellular space"/>
    <property type="evidence" value="ECO:0000318"/>
    <property type="project" value="GO_Central"/>
</dbReference>
<dbReference type="GO" id="GO:0008305">
    <property type="term" value="C:integrin complex"/>
    <property type="evidence" value="ECO:0007669"/>
    <property type="project" value="InterPro"/>
</dbReference>
<dbReference type="GO" id="GO:0004621">
    <property type="term" value="F:glycosylphosphatidylinositol phospholipase D activity"/>
    <property type="evidence" value="ECO:0000318"/>
    <property type="project" value="GO_Central"/>
</dbReference>
<dbReference type="GO" id="GO:0004630">
    <property type="term" value="F:phospholipase D activity"/>
    <property type="evidence" value="ECO:0000250"/>
    <property type="project" value="dictyBase"/>
</dbReference>
<dbReference type="GO" id="GO:0007155">
    <property type="term" value="P:cell adhesion"/>
    <property type="evidence" value="ECO:0007669"/>
    <property type="project" value="InterPro"/>
</dbReference>
<dbReference type="FunFam" id="2.130.10.130:FF:000031">
    <property type="entry name" value="Phosphatidylinositol-glycan-specific phospholipase D"/>
    <property type="match status" value="1"/>
</dbReference>
<dbReference type="Gene3D" id="2.130.10.130">
    <property type="entry name" value="Integrin alpha, N-terminal"/>
    <property type="match status" value="3"/>
</dbReference>
<dbReference type="InterPro" id="IPR013517">
    <property type="entry name" value="FG-GAP"/>
</dbReference>
<dbReference type="InterPro" id="IPR013519">
    <property type="entry name" value="Int_alpha_beta-p"/>
</dbReference>
<dbReference type="InterPro" id="IPR000413">
    <property type="entry name" value="Integrin_alpha"/>
</dbReference>
<dbReference type="InterPro" id="IPR028994">
    <property type="entry name" value="Integrin_alpha_N"/>
</dbReference>
<dbReference type="InterPro" id="IPR029002">
    <property type="entry name" value="PLPC/GPLD1"/>
</dbReference>
<dbReference type="PANTHER" id="PTHR23221">
    <property type="entry name" value="GLYCOSYLPHOSPHATIDYLINOSITOL PHOSPHOLIPASE D"/>
    <property type="match status" value="1"/>
</dbReference>
<dbReference type="PANTHER" id="PTHR23221:SF7">
    <property type="entry name" value="PHOSPHATIDYLINOSITOL-GLYCAN-SPECIFIC PHOSPHOLIPASE D"/>
    <property type="match status" value="1"/>
</dbReference>
<dbReference type="Pfam" id="PF01839">
    <property type="entry name" value="FG-GAP"/>
    <property type="match status" value="2"/>
</dbReference>
<dbReference type="Pfam" id="PF00882">
    <property type="entry name" value="Zn_dep_PLPC"/>
    <property type="match status" value="1"/>
</dbReference>
<dbReference type="PRINTS" id="PR01185">
    <property type="entry name" value="INTEGRINA"/>
</dbReference>
<dbReference type="SMART" id="SM00191">
    <property type="entry name" value="Int_alpha"/>
    <property type="match status" value="6"/>
</dbReference>
<dbReference type="SUPFAM" id="SSF69318">
    <property type="entry name" value="Integrin alpha N-terminal domain"/>
    <property type="match status" value="2"/>
</dbReference>
<dbReference type="PROSITE" id="PS51470">
    <property type="entry name" value="FG_GAP"/>
    <property type="match status" value="6"/>
</dbReference>